<accession>Q817X7</accession>
<gene>
    <name evidence="1" type="primary">hisS-2</name>
    <name type="ordered locus">BC_4398</name>
</gene>
<sequence length="423" mass="47763">MSIQIPRGTQDILPGTVELWQYIEGQAREICRRYNYKEIRTPIFEHTELFLRGVGDTTDIVQKEMYSFQDRGERSLTLRPEGTAPVVRSYVENKMFGDATQPTKLYYIGQMFRYERPQAGRYRQFVQFGIEAIGSNDPAIDAEVIALAVEFYRGMGLKNIKVVLNSLGDAASRQAHRDALIAHFEPRIGEFCSDCQSRLEKNPLRILDCKKDRNHELMGTAPSITEYLNEDSAVYYDKVQELLTMMDVPFEKDPNLVRGLDYYQHTVFEIMSEAEGFGAITTLSGGGRYNGLVQEIGGPEMPGIGFAMSIERLIMALKAENIELPLEHSIDCYVVALGEKAKDHAAKVAFDLRKAGLSVEKDYLDRKMKAQFKSADRLKAKFVAVLGEDELDKGIINLKDMATGEQEEVALDVFASYVAEKLI</sequence>
<protein>
    <recommendedName>
        <fullName evidence="1">Histidine--tRNA ligase 2</fullName>
        <ecNumber evidence="1">6.1.1.21</ecNumber>
    </recommendedName>
    <alternativeName>
        <fullName evidence="1">Histidyl-tRNA synthetase 2</fullName>
        <shortName evidence="1">HisRS 2</shortName>
    </alternativeName>
</protein>
<comment type="catalytic activity">
    <reaction evidence="1">
        <text>tRNA(His) + L-histidine + ATP = L-histidyl-tRNA(His) + AMP + diphosphate + H(+)</text>
        <dbReference type="Rhea" id="RHEA:17313"/>
        <dbReference type="Rhea" id="RHEA-COMP:9665"/>
        <dbReference type="Rhea" id="RHEA-COMP:9689"/>
        <dbReference type="ChEBI" id="CHEBI:15378"/>
        <dbReference type="ChEBI" id="CHEBI:30616"/>
        <dbReference type="ChEBI" id="CHEBI:33019"/>
        <dbReference type="ChEBI" id="CHEBI:57595"/>
        <dbReference type="ChEBI" id="CHEBI:78442"/>
        <dbReference type="ChEBI" id="CHEBI:78527"/>
        <dbReference type="ChEBI" id="CHEBI:456215"/>
        <dbReference type="EC" id="6.1.1.21"/>
    </reaction>
</comment>
<comment type="subunit">
    <text evidence="1">Homodimer.</text>
</comment>
<comment type="subcellular location">
    <subcellularLocation>
        <location evidence="1">Cytoplasm</location>
    </subcellularLocation>
</comment>
<comment type="similarity">
    <text evidence="1">Belongs to the class-II aminoacyl-tRNA synthetase family.</text>
</comment>
<feature type="chain" id="PRO_0000136098" description="Histidine--tRNA ligase 2">
    <location>
        <begin position="1"/>
        <end position="423"/>
    </location>
</feature>
<keyword id="KW-0030">Aminoacyl-tRNA synthetase</keyword>
<keyword id="KW-0067">ATP-binding</keyword>
<keyword id="KW-0963">Cytoplasm</keyword>
<keyword id="KW-0436">Ligase</keyword>
<keyword id="KW-0547">Nucleotide-binding</keyword>
<keyword id="KW-0648">Protein biosynthesis</keyword>
<keyword id="KW-1185">Reference proteome</keyword>
<proteinExistence type="inferred from homology"/>
<organism>
    <name type="scientific">Bacillus cereus (strain ATCC 14579 / DSM 31 / CCUG 7414 / JCM 2152 / NBRC 15305 / NCIMB 9373 / NCTC 2599 / NRRL B-3711)</name>
    <dbReference type="NCBI Taxonomy" id="226900"/>
    <lineage>
        <taxon>Bacteria</taxon>
        <taxon>Bacillati</taxon>
        <taxon>Bacillota</taxon>
        <taxon>Bacilli</taxon>
        <taxon>Bacillales</taxon>
        <taxon>Bacillaceae</taxon>
        <taxon>Bacillus</taxon>
        <taxon>Bacillus cereus group</taxon>
    </lineage>
</organism>
<reference key="1">
    <citation type="journal article" date="2003" name="Nature">
        <title>Genome sequence of Bacillus cereus and comparative analysis with Bacillus anthracis.</title>
        <authorList>
            <person name="Ivanova N."/>
            <person name="Sorokin A."/>
            <person name="Anderson I."/>
            <person name="Galleron N."/>
            <person name="Candelon B."/>
            <person name="Kapatral V."/>
            <person name="Bhattacharyya A."/>
            <person name="Reznik G."/>
            <person name="Mikhailova N."/>
            <person name="Lapidus A."/>
            <person name="Chu L."/>
            <person name="Mazur M."/>
            <person name="Goltsman E."/>
            <person name="Larsen N."/>
            <person name="D'Souza M."/>
            <person name="Walunas T."/>
            <person name="Grechkin Y."/>
            <person name="Pusch G."/>
            <person name="Haselkorn R."/>
            <person name="Fonstein M."/>
            <person name="Ehrlich S.D."/>
            <person name="Overbeek R."/>
            <person name="Kyrpides N.C."/>
        </authorList>
    </citation>
    <scope>NUCLEOTIDE SEQUENCE [LARGE SCALE GENOMIC DNA]</scope>
    <source>
        <strain>ATCC 14579 / DSM 31 / CCUG 7414 / JCM 2152 / NBRC 15305 / NCIMB 9373 / NCTC 2599 / NRRL B-3711</strain>
    </source>
</reference>
<evidence type="ECO:0000255" key="1">
    <source>
        <dbReference type="HAMAP-Rule" id="MF_00127"/>
    </source>
</evidence>
<dbReference type="EC" id="6.1.1.21" evidence="1"/>
<dbReference type="EMBL" id="AE016877">
    <property type="protein sequence ID" value="AAP11311.1"/>
    <property type="molecule type" value="Genomic_DNA"/>
</dbReference>
<dbReference type="RefSeq" id="NP_834110.1">
    <property type="nucleotide sequence ID" value="NC_004722.1"/>
</dbReference>
<dbReference type="SMR" id="Q817X7"/>
<dbReference type="STRING" id="226900.BC_4398"/>
<dbReference type="KEGG" id="bce:BC4398"/>
<dbReference type="PATRIC" id="fig|226900.8.peg.4549"/>
<dbReference type="HOGENOM" id="CLU_025113_1_1_9"/>
<dbReference type="OrthoDB" id="9800814at2"/>
<dbReference type="Proteomes" id="UP000001417">
    <property type="component" value="Chromosome"/>
</dbReference>
<dbReference type="GO" id="GO:0005737">
    <property type="term" value="C:cytoplasm"/>
    <property type="evidence" value="ECO:0007669"/>
    <property type="project" value="UniProtKB-SubCell"/>
</dbReference>
<dbReference type="GO" id="GO:0005524">
    <property type="term" value="F:ATP binding"/>
    <property type="evidence" value="ECO:0007669"/>
    <property type="project" value="UniProtKB-UniRule"/>
</dbReference>
<dbReference type="GO" id="GO:0140096">
    <property type="term" value="F:catalytic activity, acting on a protein"/>
    <property type="evidence" value="ECO:0007669"/>
    <property type="project" value="UniProtKB-ARBA"/>
</dbReference>
<dbReference type="GO" id="GO:0004821">
    <property type="term" value="F:histidine-tRNA ligase activity"/>
    <property type="evidence" value="ECO:0000318"/>
    <property type="project" value="GO_Central"/>
</dbReference>
<dbReference type="GO" id="GO:0016740">
    <property type="term" value="F:transferase activity"/>
    <property type="evidence" value="ECO:0007669"/>
    <property type="project" value="UniProtKB-ARBA"/>
</dbReference>
<dbReference type="GO" id="GO:0006427">
    <property type="term" value="P:histidyl-tRNA aminoacylation"/>
    <property type="evidence" value="ECO:0000318"/>
    <property type="project" value="GO_Central"/>
</dbReference>
<dbReference type="CDD" id="cd00773">
    <property type="entry name" value="HisRS-like_core"/>
    <property type="match status" value="1"/>
</dbReference>
<dbReference type="CDD" id="cd00859">
    <property type="entry name" value="HisRS_anticodon"/>
    <property type="match status" value="1"/>
</dbReference>
<dbReference type="FunFam" id="3.30.930.10:FF:000005">
    <property type="entry name" value="Histidine--tRNA ligase"/>
    <property type="match status" value="1"/>
</dbReference>
<dbReference type="FunFam" id="3.40.50.800:FF:000013">
    <property type="entry name" value="Histidine--tRNA ligase"/>
    <property type="match status" value="1"/>
</dbReference>
<dbReference type="Gene3D" id="3.40.50.800">
    <property type="entry name" value="Anticodon-binding domain"/>
    <property type="match status" value="1"/>
</dbReference>
<dbReference type="Gene3D" id="3.30.930.10">
    <property type="entry name" value="Bira Bifunctional Protein, Domain 2"/>
    <property type="match status" value="1"/>
</dbReference>
<dbReference type="HAMAP" id="MF_00127">
    <property type="entry name" value="His_tRNA_synth"/>
    <property type="match status" value="1"/>
</dbReference>
<dbReference type="InterPro" id="IPR006195">
    <property type="entry name" value="aa-tRNA-synth_II"/>
</dbReference>
<dbReference type="InterPro" id="IPR045864">
    <property type="entry name" value="aa-tRNA-synth_II/BPL/LPL"/>
</dbReference>
<dbReference type="InterPro" id="IPR004154">
    <property type="entry name" value="Anticodon-bd"/>
</dbReference>
<dbReference type="InterPro" id="IPR036621">
    <property type="entry name" value="Anticodon-bd_dom_sf"/>
</dbReference>
<dbReference type="InterPro" id="IPR015807">
    <property type="entry name" value="His-tRNA-ligase"/>
</dbReference>
<dbReference type="InterPro" id="IPR041715">
    <property type="entry name" value="HisRS-like_core"/>
</dbReference>
<dbReference type="InterPro" id="IPR004516">
    <property type="entry name" value="HisRS/HisZ"/>
</dbReference>
<dbReference type="InterPro" id="IPR033656">
    <property type="entry name" value="HisRS_anticodon"/>
</dbReference>
<dbReference type="NCBIfam" id="TIGR00442">
    <property type="entry name" value="hisS"/>
    <property type="match status" value="1"/>
</dbReference>
<dbReference type="PANTHER" id="PTHR43707:SF1">
    <property type="entry name" value="HISTIDINE--TRNA LIGASE, MITOCHONDRIAL-RELATED"/>
    <property type="match status" value="1"/>
</dbReference>
<dbReference type="PANTHER" id="PTHR43707">
    <property type="entry name" value="HISTIDYL-TRNA SYNTHETASE"/>
    <property type="match status" value="1"/>
</dbReference>
<dbReference type="Pfam" id="PF03129">
    <property type="entry name" value="HGTP_anticodon"/>
    <property type="match status" value="1"/>
</dbReference>
<dbReference type="Pfam" id="PF13393">
    <property type="entry name" value="tRNA-synt_His"/>
    <property type="match status" value="1"/>
</dbReference>
<dbReference type="PIRSF" id="PIRSF001549">
    <property type="entry name" value="His-tRNA_synth"/>
    <property type="match status" value="1"/>
</dbReference>
<dbReference type="SUPFAM" id="SSF52954">
    <property type="entry name" value="Class II aaRS ABD-related"/>
    <property type="match status" value="1"/>
</dbReference>
<dbReference type="SUPFAM" id="SSF55681">
    <property type="entry name" value="Class II aaRS and biotin synthetases"/>
    <property type="match status" value="1"/>
</dbReference>
<dbReference type="PROSITE" id="PS50862">
    <property type="entry name" value="AA_TRNA_LIGASE_II"/>
    <property type="match status" value="1"/>
</dbReference>
<name>SYH2_BACCR</name>